<proteinExistence type="inferred from homology"/>
<reference key="1">
    <citation type="submission" date="2007-03" db="EMBL/GenBank/DDBJ databases">
        <title>Complete sequence of Shewanella loihica PV-4.</title>
        <authorList>
            <consortium name="US DOE Joint Genome Institute"/>
            <person name="Copeland A."/>
            <person name="Lucas S."/>
            <person name="Lapidus A."/>
            <person name="Barry K."/>
            <person name="Detter J.C."/>
            <person name="Glavina del Rio T."/>
            <person name="Hammon N."/>
            <person name="Israni S."/>
            <person name="Dalin E."/>
            <person name="Tice H."/>
            <person name="Pitluck S."/>
            <person name="Chain P."/>
            <person name="Malfatti S."/>
            <person name="Shin M."/>
            <person name="Vergez L."/>
            <person name="Schmutz J."/>
            <person name="Larimer F."/>
            <person name="Land M."/>
            <person name="Hauser L."/>
            <person name="Kyrpides N."/>
            <person name="Mikhailova N."/>
            <person name="Romine M.F."/>
            <person name="Serres G."/>
            <person name="Fredrickson J."/>
            <person name="Tiedje J."/>
            <person name="Richardson P."/>
        </authorList>
    </citation>
    <scope>NUCLEOTIDE SEQUENCE [LARGE SCALE GENOMIC DNA]</scope>
    <source>
        <strain>ATCC BAA-1088 / PV-4</strain>
    </source>
</reference>
<keyword id="KW-0560">Oxidoreductase</keyword>
<keyword id="KW-1185">Reference proteome</keyword>
<keyword id="KW-0819">tRNA processing</keyword>
<protein>
    <recommendedName>
        <fullName evidence="1">tRNA uridine(34) hydroxylase</fullName>
        <ecNumber evidence="1">1.14.-.-</ecNumber>
    </recommendedName>
    <alternativeName>
        <fullName evidence="1">tRNA hydroxylation protein O</fullName>
    </alternativeName>
</protein>
<accession>A3QDU9</accession>
<feature type="chain" id="PRO_1000013772" description="tRNA uridine(34) hydroxylase">
    <location>
        <begin position="1"/>
        <end position="326"/>
    </location>
</feature>
<feature type="domain" description="Rhodanese" evidence="1">
    <location>
        <begin position="123"/>
        <end position="217"/>
    </location>
</feature>
<feature type="region of interest" description="Disordered" evidence="2">
    <location>
        <begin position="293"/>
        <end position="326"/>
    </location>
</feature>
<feature type="active site" description="Cysteine persulfide intermediate" evidence="1">
    <location>
        <position position="177"/>
    </location>
</feature>
<name>TRHO_SHELP</name>
<organism>
    <name type="scientific">Shewanella loihica (strain ATCC BAA-1088 / PV-4)</name>
    <dbReference type="NCBI Taxonomy" id="323850"/>
    <lineage>
        <taxon>Bacteria</taxon>
        <taxon>Pseudomonadati</taxon>
        <taxon>Pseudomonadota</taxon>
        <taxon>Gammaproteobacteria</taxon>
        <taxon>Alteromonadales</taxon>
        <taxon>Shewanellaceae</taxon>
        <taxon>Shewanella</taxon>
    </lineage>
</organism>
<evidence type="ECO:0000255" key="1">
    <source>
        <dbReference type="HAMAP-Rule" id="MF_00469"/>
    </source>
</evidence>
<evidence type="ECO:0000256" key="2">
    <source>
        <dbReference type="SAM" id="MobiDB-lite"/>
    </source>
</evidence>
<comment type="function">
    <text evidence="1">Catalyzes oxygen-dependent 5-hydroxyuridine (ho5U) modification at position 34 in tRNAs.</text>
</comment>
<comment type="catalytic activity">
    <reaction evidence="1">
        <text>uridine(34) in tRNA + AH2 + O2 = 5-hydroxyuridine(34) in tRNA + A + H2O</text>
        <dbReference type="Rhea" id="RHEA:64224"/>
        <dbReference type="Rhea" id="RHEA-COMP:11727"/>
        <dbReference type="Rhea" id="RHEA-COMP:13381"/>
        <dbReference type="ChEBI" id="CHEBI:13193"/>
        <dbReference type="ChEBI" id="CHEBI:15377"/>
        <dbReference type="ChEBI" id="CHEBI:15379"/>
        <dbReference type="ChEBI" id="CHEBI:17499"/>
        <dbReference type="ChEBI" id="CHEBI:65315"/>
        <dbReference type="ChEBI" id="CHEBI:136877"/>
    </reaction>
</comment>
<comment type="similarity">
    <text evidence="1">Belongs to the TrhO family.</text>
</comment>
<sequence length="326" mass="37355">MSQFVVCALYKFVSLPAFEALQQPLLKEMESLEIKGTLLLASEGINGTVAGSQAGIDSLLAWLDAQPGLDNIVYKLSFDDEMPFYRTKVKLKKEIVTMGVEGIDPRKVVGTYVKPKDWNKLISDPEVLLIDTRNDYEVNIGTFKNAVDPKTQTFREFPDYVKQNLDPKQHKKVAMFCTGGIRCEKSTAYLKEQGFDEVYHLEGGVLKYLEEVKPEESLWEGECFVFDNRVSVNHQLEKGQYDQCNACRLPITEEDKQSEHYVQGVSCPHCIDKLSDKQRKRFVERERQVQLAKSRGESHIGSDVKQVIEARRQDKVERKQRQHQEG</sequence>
<gene>
    <name evidence="1" type="primary">trhO</name>
    <name type="ordered locus">Shew_1781</name>
</gene>
<dbReference type="EC" id="1.14.-.-" evidence="1"/>
<dbReference type="EMBL" id="CP000606">
    <property type="protein sequence ID" value="ABO23647.1"/>
    <property type="molecule type" value="Genomic_DNA"/>
</dbReference>
<dbReference type="RefSeq" id="WP_011865579.1">
    <property type="nucleotide sequence ID" value="NC_009092.1"/>
</dbReference>
<dbReference type="SMR" id="A3QDU9"/>
<dbReference type="STRING" id="323850.Shew_1781"/>
<dbReference type="KEGG" id="slo:Shew_1781"/>
<dbReference type="eggNOG" id="COG1054">
    <property type="taxonomic scope" value="Bacteria"/>
</dbReference>
<dbReference type="HOGENOM" id="CLU_038878_0_0_6"/>
<dbReference type="OrthoDB" id="9778326at2"/>
<dbReference type="Proteomes" id="UP000001558">
    <property type="component" value="Chromosome"/>
</dbReference>
<dbReference type="GO" id="GO:0016705">
    <property type="term" value="F:oxidoreductase activity, acting on paired donors, with incorporation or reduction of molecular oxygen"/>
    <property type="evidence" value="ECO:0007669"/>
    <property type="project" value="UniProtKB-UniRule"/>
</dbReference>
<dbReference type="GO" id="GO:0006400">
    <property type="term" value="P:tRNA modification"/>
    <property type="evidence" value="ECO:0007669"/>
    <property type="project" value="UniProtKB-UniRule"/>
</dbReference>
<dbReference type="CDD" id="cd01518">
    <property type="entry name" value="RHOD_YceA"/>
    <property type="match status" value="1"/>
</dbReference>
<dbReference type="Gene3D" id="3.30.70.100">
    <property type="match status" value="1"/>
</dbReference>
<dbReference type="Gene3D" id="3.40.250.10">
    <property type="entry name" value="Rhodanese-like domain"/>
    <property type="match status" value="1"/>
</dbReference>
<dbReference type="HAMAP" id="MF_00469">
    <property type="entry name" value="TrhO"/>
    <property type="match status" value="1"/>
</dbReference>
<dbReference type="InterPro" id="IPR001763">
    <property type="entry name" value="Rhodanese-like_dom"/>
</dbReference>
<dbReference type="InterPro" id="IPR036873">
    <property type="entry name" value="Rhodanese-like_dom_sf"/>
</dbReference>
<dbReference type="InterPro" id="IPR020936">
    <property type="entry name" value="TrhO"/>
</dbReference>
<dbReference type="InterPro" id="IPR040503">
    <property type="entry name" value="TRHO_N"/>
</dbReference>
<dbReference type="NCBIfam" id="NF001136">
    <property type="entry name" value="PRK00142.1-4"/>
    <property type="match status" value="1"/>
</dbReference>
<dbReference type="PANTHER" id="PTHR43268:SF3">
    <property type="entry name" value="RHODANESE-LIKE DOMAIN-CONTAINING PROTEIN 7-RELATED"/>
    <property type="match status" value="1"/>
</dbReference>
<dbReference type="PANTHER" id="PTHR43268">
    <property type="entry name" value="THIOSULFATE SULFURTRANSFERASE/RHODANESE-LIKE DOMAIN-CONTAINING PROTEIN 2"/>
    <property type="match status" value="1"/>
</dbReference>
<dbReference type="Pfam" id="PF00581">
    <property type="entry name" value="Rhodanese"/>
    <property type="match status" value="1"/>
</dbReference>
<dbReference type="Pfam" id="PF17773">
    <property type="entry name" value="UPF0176_N"/>
    <property type="match status" value="1"/>
</dbReference>
<dbReference type="SMART" id="SM00450">
    <property type="entry name" value="RHOD"/>
    <property type="match status" value="1"/>
</dbReference>
<dbReference type="SUPFAM" id="SSF52821">
    <property type="entry name" value="Rhodanese/Cell cycle control phosphatase"/>
    <property type="match status" value="1"/>
</dbReference>
<dbReference type="PROSITE" id="PS50206">
    <property type="entry name" value="RHODANESE_3"/>
    <property type="match status" value="1"/>
</dbReference>